<organism>
    <name type="scientific">Mus musculus</name>
    <name type="common">Mouse</name>
    <dbReference type="NCBI Taxonomy" id="10090"/>
    <lineage>
        <taxon>Eukaryota</taxon>
        <taxon>Metazoa</taxon>
        <taxon>Chordata</taxon>
        <taxon>Craniata</taxon>
        <taxon>Vertebrata</taxon>
        <taxon>Euteleostomi</taxon>
        <taxon>Mammalia</taxon>
        <taxon>Eutheria</taxon>
        <taxon>Euarchontoglires</taxon>
        <taxon>Glires</taxon>
        <taxon>Rodentia</taxon>
        <taxon>Myomorpha</taxon>
        <taxon>Muroidea</taxon>
        <taxon>Muridae</taxon>
        <taxon>Murinae</taxon>
        <taxon>Mus</taxon>
        <taxon>Mus</taxon>
    </lineage>
</organism>
<reference key="1">
    <citation type="journal article" date="2005" name="Science">
        <title>The transcriptional landscape of the mammalian genome.</title>
        <authorList>
            <person name="Carninci P."/>
            <person name="Kasukawa T."/>
            <person name="Katayama S."/>
            <person name="Gough J."/>
            <person name="Frith M.C."/>
            <person name="Maeda N."/>
            <person name="Oyama R."/>
            <person name="Ravasi T."/>
            <person name="Lenhard B."/>
            <person name="Wells C."/>
            <person name="Kodzius R."/>
            <person name="Shimokawa K."/>
            <person name="Bajic V.B."/>
            <person name="Brenner S.E."/>
            <person name="Batalov S."/>
            <person name="Forrest A.R."/>
            <person name="Zavolan M."/>
            <person name="Davis M.J."/>
            <person name="Wilming L.G."/>
            <person name="Aidinis V."/>
            <person name="Allen J.E."/>
            <person name="Ambesi-Impiombato A."/>
            <person name="Apweiler R."/>
            <person name="Aturaliya R.N."/>
            <person name="Bailey T.L."/>
            <person name="Bansal M."/>
            <person name="Baxter L."/>
            <person name="Beisel K.W."/>
            <person name="Bersano T."/>
            <person name="Bono H."/>
            <person name="Chalk A.M."/>
            <person name="Chiu K.P."/>
            <person name="Choudhary V."/>
            <person name="Christoffels A."/>
            <person name="Clutterbuck D.R."/>
            <person name="Crowe M.L."/>
            <person name="Dalla E."/>
            <person name="Dalrymple B.P."/>
            <person name="de Bono B."/>
            <person name="Della Gatta G."/>
            <person name="di Bernardo D."/>
            <person name="Down T."/>
            <person name="Engstrom P."/>
            <person name="Fagiolini M."/>
            <person name="Faulkner G."/>
            <person name="Fletcher C.F."/>
            <person name="Fukushima T."/>
            <person name="Furuno M."/>
            <person name="Futaki S."/>
            <person name="Gariboldi M."/>
            <person name="Georgii-Hemming P."/>
            <person name="Gingeras T.R."/>
            <person name="Gojobori T."/>
            <person name="Green R.E."/>
            <person name="Gustincich S."/>
            <person name="Harbers M."/>
            <person name="Hayashi Y."/>
            <person name="Hensch T.K."/>
            <person name="Hirokawa N."/>
            <person name="Hill D."/>
            <person name="Huminiecki L."/>
            <person name="Iacono M."/>
            <person name="Ikeo K."/>
            <person name="Iwama A."/>
            <person name="Ishikawa T."/>
            <person name="Jakt M."/>
            <person name="Kanapin A."/>
            <person name="Katoh M."/>
            <person name="Kawasawa Y."/>
            <person name="Kelso J."/>
            <person name="Kitamura H."/>
            <person name="Kitano H."/>
            <person name="Kollias G."/>
            <person name="Krishnan S.P."/>
            <person name="Kruger A."/>
            <person name="Kummerfeld S.K."/>
            <person name="Kurochkin I.V."/>
            <person name="Lareau L.F."/>
            <person name="Lazarevic D."/>
            <person name="Lipovich L."/>
            <person name="Liu J."/>
            <person name="Liuni S."/>
            <person name="McWilliam S."/>
            <person name="Madan Babu M."/>
            <person name="Madera M."/>
            <person name="Marchionni L."/>
            <person name="Matsuda H."/>
            <person name="Matsuzawa S."/>
            <person name="Miki H."/>
            <person name="Mignone F."/>
            <person name="Miyake S."/>
            <person name="Morris K."/>
            <person name="Mottagui-Tabar S."/>
            <person name="Mulder N."/>
            <person name="Nakano N."/>
            <person name="Nakauchi H."/>
            <person name="Ng P."/>
            <person name="Nilsson R."/>
            <person name="Nishiguchi S."/>
            <person name="Nishikawa S."/>
            <person name="Nori F."/>
            <person name="Ohara O."/>
            <person name="Okazaki Y."/>
            <person name="Orlando V."/>
            <person name="Pang K.C."/>
            <person name="Pavan W.J."/>
            <person name="Pavesi G."/>
            <person name="Pesole G."/>
            <person name="Petrovsky N."/>
            <person name="Piazza S."/>
            <person name="Reed J."/>
            <person name="Reid J.F."/>
            <person name="Ring B.Z."/>
            <person name="Ringwald M."/>
            <person name="Rost B."/>
            <person name="Ruan Y."/>
            <person name="Salzberg S.L."/>
            <person name="Sandelin A."/>
            <person name="Schneider C."/>
            <person name="Schoenbach C."/>
            <person name="Sekiguchi K."/>
            <person name="Semple C.A."/>
            <person name="Seno S."/>
            <person name="Sessa L."/>
            <person name="Sheng Y."/>
            <person name="Shibata Y."/>
            <person name="Shimada H."/>
            <person name="Shimada K."/>
            <person name="Silva D."/>
            <person name="Sinclair B."/>
            <person name="Sperling S."/>
            <person name="Stupka E."/>
            <person name="Sugiura K."/>
            <person name="Sultana R."/>
            <person name="Takenaka Y."/>
            <person name="Taki K."/>
            <person name="Tammoja K."/>
            <person name="Tan S.L."/>
            <person name="Tang S."/>
            <person name="Taylor M.S."/>
            <person name="Tegner J."/>
            <person name="Teichmann S.A."/>
            <person name="Ueda H.R."/>
            <person name="van Nimwegen E."/>
            <person name="Verardo R."/>
            <person name="Wei C.L."/>
            <person name="Yagi K."/>
            <person name="Yamanishi H."/>
            <person name="Zabarovsky E."/>
            <person name="Zhu S."/>
            <person name="Zimmer A."/>
            <person name="Hide W."/>
            <person name="Bult C."/>
            <person name="Grimmond S.M."/>
            <person name="Teasdale R.D."/>
            <person name="Liu E.T."/>
            <person name="Brusic V."/>
            <person name="Quackenbush J."/>
            <person name="Wahlestedt C."/>
            <person name="Mattick J.S."/>
            <person name="Hume D.A."/>
            <person name="Kai C."/>
            <person name="Sasaki D."/>
            <person name="Tomaru Y."/>
            <person name="Fukuda S."/>
            <person name="Kanamori-Katayama M."/>
            <person name="Suzuki M."/>
            <person name="Aoki J."/>
            <person name="Arakawa T."/>
            <person name="Iida J."/>
            <person name="Imamura K."/>
            <person name="Itoh M."/>
            <person name="Kato T."/>
            <person name="Kawaji H."/>
            <person name="Kawagashira N."/>
            <person name="Kawashima T."/>
            <person name="Kojima M."/>
            <person name="Kondo S."/>
            <person name="Konno H."/>
            <person name="Nakano K."/>
            <person name="Ninomiya N."/>
            <person name="Nishio T."/>
            <person name="Okada M."/>
            <person name="Plessy C."/>
            <person name="Shibata K."/>
            <person name="Shiraki T."/>
            <person name="Suzuki S."/>
            <person name="Tagami M."/>
            <person name="Waki K."/>
            <person name="Watahiki A."/>
            <person name="Okamura-Oho Y."/>
            <person name="Suzuki H."/>
            <person name="Kawai J."/>
            <person name="Hayashizaki Y."/>
        </authorList>
    </citation>
    <scope>NUCLEOTIDE SEQUENCE [LARGE SCALE MRNA]</scope>
    <source>
        <strain>C57BL/6J</strain>
        <tissue>Retina</tissue>
        <tissue>Testis</tissue>
    </source>
</reference>
<reference key="2">
    <citation type="journal article" date="2009" name="PLoS Biol.">
        <title>Lineage-specific biology revealed by a finished genome assembly of the mouse.</title>
        <authorList>
            <person name="Church D.M."/>
            <person name="Goodstadt L."/>
            <person name="Hillier L.W."/>
            <person name="Zody M.C."/>
            <person name="Goldstein S."/>
            <person name="She X."/>
            <person name="Bult C.J."/>
            <person name="Agarwala R."/>
            <person name="Cherry J.L."/>
            <person name="DiCuccio M."/>
            <person name="Hlavina W."/>
            <person name="Kapustin Y."/>
            <person name="Meric P."/>
            <person name="Maglott D."/>
            <person name="Birtle Z."/>
            <person name="Marques A.C."/>
            <person name="Graves T."/>
            <person name="Zhou S."/>
            <person name="Teague B."/>
            <person name="Potamousis K."/>
            <person name="Churas C."/>
            <person name="Place M."/>
            <person name="Herschleb J."/>
            <person name="Runnheim R."/>
            <person name="Forrest D."/>
            <person name="Amos-Landgraf J."/>
            <person name="Schwartz D.C."/>
            <person name="Cheng Z."/>
            <person name="Lindblad-Toh K."/>
            <person name="Eichler E.E."/>
            <person name="Ponting C.P."/>
        </authorList>
    </citation>
    <scope>NUCLEOTIDE SEQUENCE [LARGE SCALE GENOMIC DNA]</scope>
    <source>
        <strain>C57BL/6J</strain>
    </source>
</reference>
<reference key="3">
    <citation type="submission" date="2005-07" db="EMBL/GenBank/DDBJ databases">
        <authorList>
            <person name="Mural R.J."/>
            <person name="Adams M.D."/>
            <person name="Myers E.W."/>
            <person name="Smith H.O."/>
            <person name="Venter J.C."/>
        </authorList>
    </citation>
    <scope>NUCLEOTIDE SEQUENCE [LARGE SCALE GENOMIC DNA]</scope>
</reference>
<reference key="4">
    <citation type="journal article" date="2010" name="Cell">
        <title>A tissue-specific atlas of mouse protein phosphorylation and expression.</title>
        <authorList>
            <person name="Huttlin E.L."/>
            <person name="Jedrychowski M.P."/>
            <person name="Elias J.E."/>
            <person name="Goswami T."/>
            <person name="Rad R."/>
            <person name="Beausoleil S.A."/>
            <person name="Villen J."/>
            <person name="Haas W."/>
            <person name="Sowa M.E."/>
            <person name="Gygi S.P."/>
        </authorList>
    </citation>
    <scope>IDENTIFICATION BY MASS SPECTROMETRY [LARGE SCALE ANALYSIS]</scope>
    <source>
        <tissue>Brain</tissue>
        <tissue>Kidney</tissue>
        <tissue>Spleen</tissue>
    </source>
</reference>
<sequence length="363" mass="41984">MANYIHVPPGSPEVPKLDVTVQDQEEQRCRDGALSLLRHLRPHWDPREVTLQLFTDGITNKLIACYVGDTMEDVVLVRIYGNKTELLVDRDEEVKSFRVLQAHGCAPQLYCTFNNGLCYEFIQGEALDPQHVCNPAIFRLIARQLAKIHAIHAHNGWIPKSNLWLKMGKYFSLIPTGFADENINKRFLSEIPSPQLLQEEMTWMKELLSSLGSPVVLCHNDLLCKNIIYNEKQGDVQFIDYEYSGYNYLAYDIGNHFNEFAGVSDVDYSLYPDRELQGQWLRSYLEAYKEYKGFGSDVTEKEVETLFIQVNQFALASHFFWGLWALIQAKYSTIEFDFLGYAVVRFNQYFKMKPEVTALKMPE</sequence>
<gene>
    <name type="primary">Etnk1</name>
    <name type="synonym">Eki1</name>
</gene>
<protein>
    <recommendedName>
        <fullName>Ethanolamine kinase 1</fullName>
        <shortName>EKI 1</shortName>
        <ecNumber>2.7.1.82</ecNumber>
    </recommendedName>
</protein>
<dbReference type="EC" id="2.7.1.82"/>
<dbReference type="EMBL" id="AK016135">
    <property type="status" value="NOT_ANNOTATED_CDS"/>
    <property type="molecule type" value="mRNA"/>
</dbReference>
<dbReference type="EMBL" id="AK044502">
    <property type="protein sequence ID" value="BAC31953.1"/>
    <property type="molecule type" value="mRNA"/>
</dbReference>
<dbReference type="EMBL" id="AC127354">
    <property type="status" value="NOT_ANNOTATED_CDS"/>
    <property type="molecule type" value="Genomic_DNA"/>
</dbReference>
<dbReference type="EMBL" id="AC132955">
    <property type="status" value="NOT_ANNOTATED_CDS"/>
    <property type="molecule type" value="Genomic_DNA"/>
</dbReference>
<dbReference type="EMBL" id="CH466572">
    <property type="protein sequence ID" value="EDL10659.1"/>
    <property type="molecule type" value="Genomic_DNA"/>
</dbReference>
<dbReference type="CCDS" id="CCDS57468.1"/>
<dbReference type="RefSeq" id="NP_083526.2">
    <property type="nucleotide sequence ID" value="NM_029250.2"/>
</dbReference>
<dbReference type="SMR" id="Q9D4V0"/>
<dbReference type="BioGRID" id="217392">
    <property type="interactions" value="3"/>
</dbReference>
<dbReference type="FunCoup" id="Q9D4V0">
    <property type="interactions" value="3491"/>
</dbReference>
<dbReference type="STRING" id="10090.ENSMUSP00000032413"/>
<dbReference type="iPTMnet" id="Q9D4V0"/>
<dbReference type="PhosphoSitePlus" id="Q9D4V0"/>
<dbReference type="PaxDb" id="10090-ENSMUSP00000032413"/>
<dbReference type="ProteomicsDB" id="277816"/>
<dbReference type="Pumba" id="Q9D4V0"/>
<dbReference type="Antibodypedia" id="24166">
    <property type="antibodies" value="207 antibodies from 22 providers"/>
</dbReference>
<dbReference type="DNASU" id="75320"/>
<dbReference type="Ensembl" id="ENSMUST00000032413.7">
    <property type="protein sequence ID" value="ENSMUSP00000032413.5"/>
    <property type="gene ID" value="ENSMUSG00000030275.7"/>
</dbReference>
<dbReference type="GeneID" id="75320"/>
<dbReference type="KEGG" id="mmu:75320"/>
<dbReference type="UCSC" id="uc009eqe.1">
    <property type="organism name" value="mouse"/>
</dbReference>
<dbReference type="AGR" id="MGI:1922570"/>
<dbReference type="CTD" id="55500"/>
<dbReference type="MGI" id="MGI:1922570">
    <property type="gene designation" value="Etnk1"/>
</dbReference>
<dbReference type="VEuPathDB" id="HostDB:ENSMUSG00000030275"/>
<dbReference type="eggNOG" id="KOG4720">
    <property type="taxonomic scope" value="Eukaryota"/>
</dbReference>
<dbReference type="GeneTree" id="ENSGT00950000182939"/>
<dbReference type="HOGENOM" id="CLU_012712_1_0_1"/>
<dbReference type="InParanoid" id="Q9D4V0"/>
<dbReference type="OMA" id="FALIPKY"/>
<dbReference type="OrthoDB" id="5966at9989"/>
<dbReference type="PhylomeDB" id="Q9D4V0"/>
<dbReference type="TreeFam" id="TF313549"/>
<dbReference type="Reactome" id="R-MMU-1483213">
    <property type="pathway name" value="Synthesis of PE"/>
</dbReference>
<dbReference type="UniPathway" id="UPA00558">
    <property type="reaction ID" value="UER00741"/>
</dbReference>
<dbReference type="BioGRID-ORCS" id="75320">
    <property type="hits" value="12 hits in 82 CRISPR screens"/>
</dbReference>
<dbReference type="ChiTaRS" id="Etnk1">
    <property type="organism name" value="mouse"/>
</dbReference>
<dbReference type="PRO" id="PR:Q9D4V0"/>
<dbReference type="Proteomes" id="UP000000589">
    <property type="component" value="Chromosome 6"/>
</dbReference>
<dbReference type="RNAct" id="Q9D4V0">
    <property type="molecule type" value="protein"/>
</dbReference>
<dbReference type="Bgee" id="ENSMUSG00000030275">
    <property type="expression patterns" value="Expressed in caudate-putamen and 260 other cell types or tissues"/>
</dbReference>
<dbReference type="ExpressionAtlas" id="Q9D4V0">
    <property type="expression patterns" value="baseline and differential"/>
</dbReference>
<dbReference type="GO" id="GO:0005737">
    <property type="term" value="C:cytoplasm"/>
    <property type="evidence" value="ECO:0007669"/>
    <property type="project" value="UniProtKB-SubCell"/>
</dbReference>
<dbReference type="GO" id="GO:0005524">
    <property type="term" value="F:ATP binding"/>
    <property type="evidence" value="ECO:0007669"/>
    <property type="project" value="UniProtKB-KW"/>
</dbReference>
<dbReference type="GO" id="GO:0004305">
    <property type="term" value="F:ethanolamine kinase activity"/>
    <property type="evidence" value="ECO:0007669"/>
    <property type="project" value="UniProtKB-EC"/>
</dbReference>
<dbReference type="GO" id="GO:0006646">
    <property type="term" value="P:phosphatidylethanolamine biosynthetic process"/>
    <property type="evidence" value="ECO:0007669"/>
    <property type="project" value="UniProtKB-UniPathway"/>
</dbReference>
<dbReference type="CDD" id="cd05157">
    <property type="entry name" value="ETNK_euk"/>
    <property type="match status" value="1"/>
</dbReference>
<dbReference type="FunFam" id="3.90.1200.10:FF:000002">
    <property type="entry name" value="Ethanolamine kinase 1"/>
    <property type="match status" value="1"/>
</dbReference>
<dbReference type="Gene3D" id="3.90.1200.10">
    <property type="match status" value="1"/>
</dbReference>
<dbReference type="Gene3D" id="3.30.200.20">
    <property type="entry name" value="Phosphorylase Kinase, domain 1"/>
    <property type="match status" value="1"/>
</dbReference>
<dbReference type="InterPro" id="IPR011009">
    <property type="entry name" value="Kinase-like_dom_sf"/>
</dbReference>
<dbReference type="PANTHER" id="PTHR22603">
    <property type="entry name" value="CHOLINE/ETHANOALAMINE KINASE"/>
    <property type="match status" value="1"/>
</dbReference>
<dbReference type="PANTHER" id="PTHR22603:SF91">
    <property type="entry name" value="ETHANOLAMINE KINASE 1"/>
    <property type="match status" value="1"/>
</dbReference>
<dbReference type="Pfam" id="PF01633">
    <property type="entry name" value="Choline_kinase"/>
    <property type="match status" value="1"/>
</dbReference>
<dbReference type="SUPFAM" id="SSF56112">
    <property type="entry name" value="Protein kinase-like (PK-like)"/>
    <property type="match status" value="1"/>
</dbReference>
<name>EKI1_MOUSE</name>
<proteinExistence type="evidence at protein level"/>
<accession>Q9D4V0</accession>
<accession>F6Y9V2</accession>
<accession>Q8BXQ0</accession>
<keyword id="KW-0067">ATP-binding</keyword>
<keyword id="KW-0963">Cytoplasm</keyword>
<keyword id="KW-0418">Kinase</keyword>
<keyword id="KW-0444">Lipid biosynthesis</keyword>
<keyword id="KW-0443">Lipid metabolism</keyword>
<keyword id="KW-0547">Nucleotide-binding</keyword>
<keyword id="KW-0594">Phospholipid biosynthesis</keyword>
<keyword id="KW-1208">Phospholipid metabolism</keyword>
<keyword id="KW-1185">Reference proteome</keyword>
<keyword id="KW-0808">Transferase</keyword>
<evidence type="ECO:0000250" key="1">
    <source>
        <dbReference type="UniProtKB" id="Q9HBU6"/>
    </source>
</evidence>
<evidence type="ECO:0000305" key="2"/>
<comment type="function">
    <text evidence="1">Highly specific for ethanolamine phosphorylation. May be a rate-controlling step in phosphatidylethanolamine biosynthesis.</text>
</comment>
<comment type="catalytic activity">
    <reaction evidence="1">
        <text>ethanolamine + ATP = phosphoethanolamine + ADP + H(+)</text>
        <dbReference type="Rhea" id="RHEA:13069"/>
        <dbReference type="ChEBI" id="CHEBI:15378"/>
        <dbReference type="ChEBI" id="CHEBI:30616"/>
        <dbReference type="ChEBI" id="CHEBI:57603"/>
        <dbReference type="ChEBI" id="CHEBI:58190"/>
        <dbReference type="ChEBI" id="CHEBI:456216"/>
        <dbReference type="EC" id="2.7.1.82"/>
    </reaction>
    <physiologicalReaction direction="left-to-right" evidence="1">
        <dbReference type="Rhea" id="RHEA:13070"/>
    </physiologicalReaction>
</comment>
<comment type="pathway">
    <text evidence="1">Phospholipid metabolism; phosphatidylethanolamine biosynthesis; phosphatidylethanolamine from ethanolamine: step 1/3.</text>
</comment>
<comment type="subcellular location">
    <subcellularLocation>
        <location evidence="1">Cytoplasm</location>
    </subcellularLocation>
</comment>
<comment type="similarity">
    <text evidence="2">Belongs to the choline/ethanolamine kinase family.</text>
</comment>
<feature type="chain" id="PRO_0000206228" description="Ethanolamine kinase 1">
    <location>
        <begin position="1"/>
        <end position="363"/>
    </location>
</feature>
<feature type="sequence conflict" description="In Ref. 1; AK016135." evidence="2" ref="1">
    <original>A</original>
    <variation>L</variation>
    <location>
        <position position="126"/>
    </location>
</feature>
<feature type="sequence conflict" description="In Ref. 1; AK016135." evidence="2" ref="1">
    <original>WL</original>
    <variation>CV</variation>
    <location>
        <begin position="280"/>
        <end position="281"/>
    </location>
</feature>